<keyword id="KW-0054">Arabinose catabolism</keyword>
<keyword id="KW-0119">Carbohydrate metabolism</keyword>
<keyword id="KW-0413">Isomerase</keyword>
<keyword id="KW-0464">Manganese</keyword>
<keyword id="KW-0479">Metal-binding</keyword>
<keyword id="KW-1185">Reference proteome</keyword>
<sequence length="511" mass="55716">MSNPNYTSANGTSLSQYEVWFLTGSQHLYGEDVLKQVAAQSQEIADALNGSSDVPVKVVWKPVLTDSDAIRRTALEANADDSVIGVTAWMHTFSPAKMWIQGLDLLRKPLLHLHTQANVELPWADIDFDFMNLNQAAHGDREFGYIQSRLGIPRKTVVGHVSNPEVTRQVGVWQRASAGWAAVRTLKLTRFGDNMRNVAVTEGDKTEAELRFGVSVNTWSVNELADAVHGAAESDVDALVAEYERLYEVVPELKAGGARHESLRYSARIELGLRSFLEANGSAAFTTSFEDLGELRQLPGMAVQRLMADGYGFGAEGDWKTAILVRAAKVMGSGLPGGASLMEDYTYHLAPGQEKILGAHMLEVCPSLTATKPRVEIHPLGIGGKEDPVRMVFDTDAGPGVVVALSDMRDRFRLVANAVDVVDLDEPLPNLPVARALWSPKPDFATSAAAWLTAGAAHHTVLSTQVGMDVFEDFAEIAKTELLTIDEGTTIRQFKKELNWNAAYYRLAGGL</sequence>
<evidence type="ECO:0000255" key="1">
    <source>
        <dbReference type="HAMAP-Rule" id="MF_00519"/>
    </source>
</evidence>
<comment type="function">
    <text evidence="1">Catalyzes the conversion of L-arabinose to L-ribulose.</text>
</comment>
<comment type="catalytic activity">
    <reaction evidence="1">
        <text>beta-L-arabinopyranose = L-ribulose</text>
        <dbReference type="Rhea" id="RHEA:14821"/>
        <dbReference type="ChEBI" id="CHEBI:16880"/>
        <dbReference type="ChEBI" id="CHEBI:40886"/>
        <dbReference type="EC" id="5.3.1.4"/>
    </reaction>
</comment>
<comment type="cofactor">
    <cofactor evidence="1">
        <name>Mn(2+)</name>
        <dbReference type="ChEBI" id="CHEBI:29035"/>
    </cofactor>
    <text evidence="1">Binds 1 Mn(2+) ion per subunit.</text>
</comment>
<comment type="pathway">
    <text evidence="1">Carbohydrate degradation; L-arabinose degradation via L-ribulose; D-xylulose 5-phosphate from L-arabinose (bacterial route): step 1/3.</text>
</comment>
<comment type="similarity">
    <text evidence="1">Belongs to the arabinose isomerase family.</text>
</comment>
<accession>A0JRF5</accession>
<protein>
    <recommendedName>
        <fullName evidence="1">L-arabinose isomerase</fullName>
        <ecNumber evidence="1">5.3.1.4</ecNumber>
    </recommendedName>
</protein>
<name>ARAA_ARTS2</name>
<reference key="1">
    <citation type="journal article" date="2013" name="Stand. Genomic Sci.">
        <title>Complete genome sequence of Arthrobacter sp. strain FB24.</title>
        <authorList>
            <person name="Nakatsu C.H."/>
            <person name="Barabote R."/>
            <person name="Thompson S."/>
            <person name="Bruce D."/>
            <person name="Detter C."/>
            <person name="Brettin T."/>
            <person name="Han C."/>
            <person name="Beasley F."/>
            <person name="Chen W."/>
            <person name="Konopka A."/>
            <person name="Xie G."/>
        </authorList>
    </citation>
    <scope>NUCLEOTIDE SEQUENCE [LARGE SCALE GENOMIC DNA]</scope>
    <source>
        <strain>FB24</strain>
    </source>
</reference>
<proteinExistence type="inferred from homology"/>
<organism>
    <name type="scientific">Arthrobacter sp. (strain FB24)</name>
    <dbReference type="NCBI Taxonomy" id="290399"/>
    <lineage>
        <taxon>Bacteria</taxon>
        <taxon>Bacillati</taxon>
        <taxon>Actinomycetota</taxon>
        <taxon>Actinomycetes</taxon>
        <taxon>Micrococcales</taxon>
        <taxon>Micrococcaceae</taxon>
        <taxon>Arthrobacter</taxon>
    </lineage>
</organism>
<feature type="chain" id="PRO_0000312600" description="L-arabinose isomerase">
    <location>
        <begin position="1"/>
        <end position="511"/>
    </location>
</feature>
<feature type="binding site" evidence="1">
    <location>
        <position position="316"/>
    </location>
    <ligand>
        <name>Mn(2+)</name>
        <dbReference type="ChEBI" id="CHEBI:29035"/>
    </ligand>
</feature>
<feature type="binding site" evidence="1">
    <location>
        <position position="343"/>
    </location>
    <ligand>
        <name>Mn(2+)</name>
        <dbReference type="ChEBI" id="CHEBI:29035"/>
    </ligand>
</feature>
<feature type="binding site" evidence="1">
    <location>
        <position position="360"/>
    </location>
    <ligand>
        <name>Mn(2+)</name>
        <dbReference type="ChEBI" id="CHEBI:29035"/>
    </ligand>
</feature>
<feature type="binding site" evidence="1">
    <location>
        <position position="459"/>
    </location>
    <ligand>
        <name>Mn(2+)</name>
        <dbReference type="ChEBI" id="CHEBI:29035"/>
    </ligand>
</feature>
<gene>
    <name evidence="1" type="primary">araA</name>
    <name type="ordered locus">Arth_0224</name>
</gene>
<dbReference type="EC" id="5.3.1.4" evidence="1"/>
<dbReference type="EMBL" id="CP000454">
    <property type="protein sequence ID" value="ABK01625.1"/>
    <property type="molecule type" value="Genomic_DNA"/>
</dbReference>
<dbReference type="RefSeq" id="WP_011690095.1">
    <property type="nucleotide sequence ID" value="NC_008541.1"/>
</dbReference>
<dbReference type="SMR" id="A0JRF5"/>
<dbReference type="STRING" id="290399.Arth_0224"/>
<dbReference type="KEGG" id="art:Arth_0224"/>
<dbReference type="eggNOG" id="COG2160">
    <property type="taxonomic scope" value="Bacteria"/>
</dbReference>
<dbReference type="HOGENOM" id="CLU_045663_0_0_11"/>
<dbReference type="OrthoDB" id="9765600at2"/>
<dbReference type="UniPathway" id="UPA00145">
    <property type="reaction ID" value="UER00565"/>
</dbReference>
<dbReference type="Proteomes" id="UP000000754">
    <property type="component" value="Chromosome"/>
</dbReference>
<dbReference type="GO" id="GO:0005829">
    <property type="term" value="C:cytosol"/>
    <property type="evidence" value="ECO:0007669"/>
    <property type="project" value="TreeGrafter"/>
</dbReference>
<dbReference type="GO" id="GO:0008733">
    <property type="term" value="F:L-arabinose isomerase activity"/>
    <property type="evidence" value="ECO:0007669"/>
    <property type="project" value="UniProtKB-UniRule"/>
</dbReference>
<dbReference type="GO" id="GO:0030145">
    <property type="term" value="F:manganese ion binding"/>
    <property type="evidence" value="ECO:0007669"/>
    <property type="project" value="UniProtKB-UniRule"/>
</dbReference>
<dbReference type="GO" id="GO:0019569">
    <property type="term" value="P:L-arabinose catabolic process to xylulose 5-phosphate"/>
    <property type="evidence" value="ECO:0007669"/>
    <property type="project" value="UniProtKB-UniRule"/>
</dbReference>
<dbReference type="CDD" id="cd03557">
    <property type="entry name" value="L-arabinose_isomerase"/>
    <property type="match status" value="1"/>
</dbReference>
<dbReference type="Gene3D" id="3.40.50.10940">
    <property type="match status" value="1"/>
</dbReference>
<dbReference type="HAMAP" id="MF_00519">
    <property type="entry name" value="Arabinose_Isome"/>
    <property type="match status" value="1"/>
</dbReference>
<dbReference type="InterPro" id="IPR024664">
    <property type="entry name" value="Ara_Isoase_C"/>
</dbReference>
<dbReference type="InterPro" id="IPR055390">
    <property type="entry name" value="AraA_central"/>
</dbReference>
<dbReference type="InterPro" id="IPR055389">
    <property type="entry name" value="AraA_N"/>
</dbReference>
<dbReference type="InterPro" id="IPR038583">
    <property type="entry name" value="AraA_N_sf"/>
</dbReference>
<dbReference type="InterPro" id="IPR004216">
    <property type="entry name" value="Fuc/Ara_isomerase_C"/>
</dbReference>
<dbReference type="InterPro" id="IPR009015">
    <property type="entry name" value="Fucose_isomerase_N/cen_sf"/>
</dbReference>
<dbReference type="InterPro" id="IPR003762">
    <property type="entry name" value="Lara_isomerase"/>
</dbReference>
<dbReference type="NCBIfam" id="NF002795">
    <property type="entry name" value="PRK02929.1"/>
    <property type="match status" value="1"/>
</dbReference>
<dbReference type="PANTHER" id="PTHR38464">
    <property type="entry name" value="L-ARABINOSE ISOMERASE"/>
    <property type="match status" value="1"/>
</dbReference>
<dbReference type="PANTHER" id="PTHR38464:SF1">
    <property type="entry name" value="L-ARABINOSE ISOMERASE"/>
    <property type="match status" value="1"/>
</dbReference>
<dbReference type="Pfam" id="PF24856">
    <property type="entry name" value="AraA_central"/>
    <property type="match status" value="1"/>
</dbReference>
<dbReference type="Pfam" id="PF02610">
    <property type="entry name" value="AraA_N"/>
    <property type="match status" value="1"/>
</dbReference>
<dbReference type="Pfam" id="PF11762">
    <property type="entry name" value="Arabinose_Iso_C"/>
    <property type="match status" value="1"/>
</dbReference>
<dbReference type="PIRSF" id="PIRSF001478">
    <property type="entry name" value="L-ara_isomerase"/>
    <property type="match status" value="1"/>
</dbReference>
<dbReference type="SUPFAM" id="SSF50443">
    <property type="entry name" value="FucI/AraA C-terminal domain-like"/>
    <property type="match status" value="1"/>
</dbReference>
<dbReference type="SUPFAM" id="SSF53743">
    <property type="entry name" value="FucI/AraA N-terminal and middle domains"/>
    <property type="match status" value="1"/>
</dbReference>